<accession>A5IRJ3</accession>
<name>UGTP_STAA9</name>
<feature type="chain" id="PRO_1000085892" description="Processive diacylglycerol beta-glucosyltransferase">
    <location>
        <begin position="1"/>
        <end position="391"/>
    </location>
</feature>
<organism>
    <name type="scientific">Staphylococcus aureus (strain JH9)</name>
    <dbReference type="NCBI Taxonomy" id="359786"/>
    <lineage>
        <taxon>Bacteria</taxon>
        <taxon>Bacillati</taxon>
        <taxon>Bacillota</taxon>
        <taxon>Bacilli</taxon>
        <taxon>Bacillales</taxon>
        <taxon>Staphylococcaceae</taxon>
        <taxon>Staphylococcus</taxon>
    </lineage>
</organism>
<proteinExistence type="inferred from homology"/>
<comment type="function">
    <text evidence="1">Processive glucosyltransferase involved in the biosynthesis of both the bilayer- and non-bilayer-forming membrane glucolipids. Is able to successively transfer two glucosyl residues to diacylglycerol (DAG), thereby catalyzing the formation of beta-monoglucosyl-DAG (3-O-(beta-D-glucopyranosyl)-1,2-diacyl-sn-glycerol) and beta-diglucosyl-DAG (3-O-(beta-D-glucopyranosyl-beta-(1-&gt;6)-D-glucopyranosyl)-1,2-diacyl-sn-glycerol). Beta-diglucosyl-DAG is the predominant glycolipid found in Bacillales and is also used as a membrane anchor for lipoteichoic acid (LTA).</text>
</comment>
<comment type="catalytic activity">
    <reaction>
        <text>a 1,2-diacyl-3-O-(beta-D-glucopyranosyl)-sn-glycerol + UDP-alpha-D-glucose = a 1,2-diacyl-3-O-(beta-D-Glc-(1-&gt;6)-beta-D-Glc)-sn-glycerol + UDP + H(+)</text>
        <dbReference type="Rhea" id="RHEA:39031"/>
        <dbReference type="ChEBI" id="CHEBI:15378"/>
        <dbReference type="ChEBI" id="CHEBI:58223"/>
        <dbReference type="ChEBI" id="CHEBI:58885"/>
        <dbReference type="ChEBI" id="CHEBI:75799"/>
        <dbReference type="ChEBI" id="CHEBI:76264"/>
        <dbReference type="EC" id="2.4.1.315"/>
    </reaction>
</comment>
<comment type="catalytic activity">
    <reaction evidence="1">
        <text>a 1,2-diacyl-sn-glycerol + UDP-alpha-D-glucose = a 1,2-diacyl-3-O-(beta-D-glucopyranosyl)-sn-glycerol + UDP + H(+)</text>
        <dbReference type="Rhea" id="RHEA:17285"/>
        <dbReference type="ChEBI" id="CHEBI:15378"/>
        <dbReference type="ChEBI" id="CHEBI:17815"/>
        <dbReference type="ChEBI" id="CHEBI:58223"/>
        <dbReference type="ChEBI" id="CHEBI:58885"/>
        <dbReference type="ChEBI" id="CHEBI:75799"/>
    </reaction>
</comment>
<comment type="pathway">
    <text evidence="1">Glycolipid metabolism; diglucosyl-diacylglycerol biosynthesis.</text>
</comment>
<comment type="subcellular location">
    <subcellularLocation>
        <location evidence="1">Cell membrane</location>
    </subcellularLocation>
</comment>
<comment type="similarity">
    <text evidence="1">Belongs to the glycosyltransferase 28 family. UgtP subfamily.</text>
</comment>
<protein>
    <recommendedName>
        <fullName evidence="1">Processive diacylglycerol beta-glucosyltransferase</fullName>
        <ecNumber>2.4.1.315</ecNumber>
    </recommendedName>
    <alternativeName>
        <fullName evidence="1">Beta-diglucosyldiacylglycerol synthase</fullName>
        <shortName evidence="1">Beta-DGS</shortName>
        <shortName evidence="1">DGlcDAG synthase</shortName>
        <shortName evidence="1">Glc2-DAG synthase</shortName>
    </alternativeName>
    <alternativeName>
        <fullName evidence="1">Beta-gentiobiosyldiacylglycerol synthase</fullName>
    </alternativeName>
    <alternativeName>
        <fullName evidence="1">Beta-monoglucosyldiacylglycerol synthase</fullName>
        <shortName evidence="1">Beta-MGS</shortName>
        <shortName evidence="1">MGlcDAG synthase</shortName>
    </alternativeName>
    <alternativeName>
        <fullName>Diglucosyl diacylglycerol synthase (1,6-linking)</fullName>
    </alternativeName>
    <alternativeName>
        <fullName evidence="1">Glucosyl-beta-1,6-glucosyldiacylglycerol synthase</fullName>
    </alternativeName>
    <alternativeName>
        <fullName evidence="1">UDP glucosyltransferase</fullName>
    </alternativeName>
    <alternativeName>
        <fullName evidence="1">UDP-glucose:1,2-diacylglycerol-3-beta-D-glucosyltransferase</fullName>
    </alternativeName>
</protein>
<gene>
    <name evidence="1" type="primary">ugtP</name>
    <name type="ordered locus">SaurJH9_1015</name>
</gene>
<sequence>MVTQNKKILIITGSFGNGHMQVTQSIVNQLNDMNLDHLSVIEHDLFMEAHPILTSICKKWYINSFKYFRNMYKGFYYSRPDKLDKCFYKYYGLNKLINLLIKEKPDLILLTFPTPVMSVLTEQFNINIPVATVMTDYRLHKNWITPYSTRYYVATKETKQDFIDVGIDPSTVKVTGIPIDNKFETPINQKQWLIDNNLDPDKQTILMSAGAFGVSKGFDTMITDILAKSANAQVVMICGKSKELKRSLIAKFKSNENVLILGYTKHMNEWMASSQLMITKPGGITITEGFARCIPMIFLNPAPGQELENALYFEEKGFGKIADTPEEAIKIVASLTNGNEQLTNMISTMEQDKIKYATQTICRDLLDLIGHSSQPQEIYGKVPLYARFFVK</sequence>
<reference key="1">
    <citation type="submission" date="2007-05" db="EMBL/GenBank/DDBJ databases">
        <title>Complete sequence of chromosome of Staphylococcus aureus subsp. aureus JH9.</title>
        <authorList>
            <consortium name="US DOE Joint Genome Institute"/>
            <person name="Copeland A."/>
            <person name="Lucas S."/>
            <person name="Lapidus A."/>
            <person name="Barry K."/>
            <person name="Detter J.C."/>
            <person name="Glavina del Rio T."/>
            <person name="Hammon N."/>
            <person name="Israni S."/>
            <person name="Pitluck S."/>
            <person name="Chain P."/>
            <person name="Malfatti S."/>
            <person name="Shin M."/>
            <person name="Vergez L."/>
            <person name="Schmutz J."/>
            <person name="Larimer F."/>
            <person name="Land M."/>
            <person name="Hauser L."/>
            <person name="Kyrpides N."/>
            <person name="Kim E."/>
            <person name="Tomasz A."/>
            <person name="Richardson P."/>
        </authorList>
    </citation>
    <scope>NUCLEOTIDE SEQUENCE [LARGE SCALE GENOMIC DNA]</scope>
    <source>
        <strain>JH9</strain>
    </source>
</reference>
<keyword id="KW-0119">Carbohydrate metabolism</keyword>
<keyword id="KW-1003">Cell membrane</keyword>
<keyword id="KW-0328">Glycosyltransferase</keyword>
<keyword id="KW-0444">Lipid biosynthesis</keyword>
<keyword id="KW-0443">Lipid metabolism</keyword>
<keyword id="KW-0472">Membrane</keyword>
<keyword id="KW-0808">Transferase</keyword>
<dbReference type="EC" id="2.4.1.315"/>
<dbReference type="EMBL" id="CP000703">
    <property type="protein sequence ID" value="ABQ48816.1"/>
    <property type="molecule type" value="Genomic_DNA"/>
</dbReference>
<dbReference type="RefSeq" id="WP_000258645.1">
    <property type="nucleotide sequence ID" value="NC_009487.1"/>
</dbReference>
<dbReference type="SMR" id="A5IRJ3"/>
<dbReference type="CAZy" id="GT28">
    <property type="family name" value="Glycosyltransferase Family 28"/>
</dbReference>
<dbReference type="KEGG" id="saj:SaurJH9_1015"/>
<dbReference type="HOGENOM" id="CLU_028367_0_1_9"/>
<dbReference type="UniPathway" id="UPA00894"/>
<dbReference type="GO" id="GO:0005886">
    <property type="term" value="C:plasma membrane"/>
    <property type="evidence" value="ECO:0007669"/>
    <property type="project" value="UniProtKB-SubCell"/>
</dbReference>
<dbReference type="GO" id="GO:0047228">
    <property type="term" value="F:1,2-diacylglycerol 3-glucosyltransferase activity"/>
    <property type="evidence" value="ECO:0007669"/>
    <property type="project" value="UniProtKB-UniRule"/>
</dbReference>
<dbReference type="GO" id="GO:0009246">
    <property type="term" value="P:enterobacterial common antigen biosynthetic process"/>
    <property type="evidence" value="ECO:0007669"/>
    <property type="project" value="UniProtKB-UniPathway"/>
</dbReference>
<dbReference type="GO" id="GO:0009247">
    <property type="term" value="P:glycolipid biosynthetic process"/>
    <property type="evidence" value="ECO:0007669"/>
    <property type="project" value="UniProtKB-UniRule"/>
</dbReference>
<dbReference type="GO" id="GO:0070395">
    <property type="term" value="P:lipoteichoic acid biosynthetic process"/>
    <property type="evidence" value="ECO:0007669"/>
    <property type="project" value="UniProtKB-UniRule"/>
</dbReference>
<dbReference type="CDD" id="cd17507">
    <property type="entry name" value="GT28_Beta-DGS-like"/>
    <property type="match status" value="1"/>
</dbReference>
<dbReference type="Gene3D" id="3.40.50.2000">
    <property type="entry name" value="Glycogen Phosphorylase B"/>
    <property type="match status" value="2"/>
</dbReference>
<dbReference type="HAMAP" id="MF_01280">
    <property type="entry name" value="Diacylglyc_glucosyltr"/>
    <property type="match status" value="1"/>
</dbReference>
<dbReference type="InterPro" id="IPR009695">
    <property type="entry name" value="Diacylglyc_glucosyltr_N"/>
</dbReference>
<dbReference type="InterPro" id="IPR007235">
    <property type="entry name" value="Glyco_trans_28_C"/>
</dbReference>
<dbReference type="InterPro" id="IPR050519">
    <property type="entry name" value="Glycosyltransf_28_UgtP"/>
</dbReference>
<dbReference type="InterPro" id="IPR023589">
    <property type="entry name" value="Pro_diacylglycrl_glcsylTrfase"/>
</dbReference>
<dbReference type="NCBIfam" id="NF010134">
    <property type="entry name" value="PRK13608.1"/>
    <property type="match status" value="1"/>
</dbReference>
<dbReference type="PANTHER" id="PTHR43025">
    <property type="entry name" value="MONOGALACTOSYLDIACYLGLYCEROL SYNTHASE"/>
    <property type="match status" value="1"/>
</dbReference>
<dbReference type="PANTHER" id="PTHR43025:SF3">
    <property type="entry name" value="MONOGALACTOSYLDIACYLGLYCEROL SYNTHASE 1, CHLOROPLASTIC"/>
    <property type="match status" value="1"/>
</dbReference>
<dbReference type="Pfam" id="PF04101">
    <property type="entry name" value="Glyco_tran_28_C"/>
    <property type="match status" value="1"/>
</dbReference>
<dbReference type="Pfam" id="PF06925">
    <property type="entry name" value="MGDG_synth"/>
    <property type="match status" value="1"/>
</dbReference>
<dbReference type="SUPFAM" id="SSF53756">
    <property type="entry name" value="UDP-Glycosyltransferase/glycogen phosphorylase"/>
    <property type="match status" value="1"/>
</dbReference>
<evidence type="ECO:0000255" key="1">
    <source>
        <dbReference type="HAMAP-Rule" id="MF_01280"/>
    </source>
</evidence>